<keyword id="KW-0488">Methylation</keyword>
<keyword id="KW-0687">Ribonucleoprotein</keyword>
<keyword id="KW-0689">Ribosomal protein</keyword>
<keyword id="KW-0694">RNA-binding</keyword>
<keyword id="KW-0699">rRNA-binding</keyword>
<gene>
    <name evidence="1" type="primary">rplK</name>
    <name type="ordered locus">Reut_A3193</name>
</gene>
<comment type="function">
    <text evidence="1">Forms part of the ribosomal stalk which helps the ribosome interact with GTP-bound translation factors.</text>
</comment>
<comment type="subunit">
    <text evidence="1">Part of the ribosomal stalk of the 50S ribosomal subunit. Interacts with L10 and the large rRNA to form the base of the stalk. L10 forms an elongated spine to which L12 dimers bind in a sequential fashion forming a multimeric L10(L12)X complex.</text>
</comment>
<comment type="PTM">
    <text evidence="1">One or more lysine residues are methylated.</text>
</comment>
<comment type="similarity">
    <text evidence="1">Belongs to the universal ribosomal protein uL11 family.</text>
</comment>
<dbReference type="EMBL" id="CP000090">
    <property type="protein sequence ID" value="AAZ62553.1"/>
    <property type="molecule type" value="Genomic_DNA"/>
</dbReference>
<dbReference type="SMR" id="Q46WD0"/>
<dbReference type="STRING" id="264198.Reut_A3193"/>
<dbReference type="KEGG" id="reu:Reut_A3193"/>
<dbReference type="eggNOG" id="COG0080">
    <property type="taxonomic scope" value="Bacteria"/>
</dbReference>
<dbReference type="HOGENOM" id="CLU_074237_2_0_4"/>
<dbReference type="OrthoDB" id="9802408at2"/>
<dbReference type="GO" id="GO:0022625">
    <property type="term" value="C:cytosolic large ribosomal subunit"/>
    <property type="evidence" value="ECO:0007669"/>
    <property type="project" value="TreeGrafter"/>
</dbReference>
<dbReference type="GO" id="GO:0070180">
    <property type="term" value="F:large ribosomal subunit rRNA binding"/>
    <property type="evidence" value="ECO:0007669"/>
    <property type="project" value="UniProtKB-UniRule"/>
</dbReference>
<dbReference type="GO" id="GO:0003735">
    <property type="term" value="F:structural constituent of ribosome"/>
    <property type="evidence" value="ECO:0007669"/>
    <property type="project" value="InterPro"/>
</dbReference>
<dbReference type="GO" id="GO:0006412">
    <property type="term" value="P:translation"/>
    <property type="evidence" value="ECO:0007669"/>
    <property type="project" value="UniProtKB-UniRule"/>
</dbReference>
<dbReference type="CDD" id="cd00349">
    <property type="entry name" value="Ribosomal_L11"/>
    <property type="match status" value="1"/>
</dbReference>
<dbReference type="FunFam" id="1.10.10.250:FF:000001">
    <property type="entry name" value="50S ribosomal protein L11"/>
    <property type="match status" value="1"/>
</dbReference>
<dbReference type="FunFam" id="3.30.1550.10:FF:000001">
    <property type="entry name" value="50S ribosomal protein L11"/>
    <property type="match status" value="1"/>
</dbReference>
<dbReference type="Gene3D" id="1.10.10.250">
    <property type="entry name" value="Ribosomal protein L11, C-terminal domain"/>
    <property type="match status" value="1"/>
</dbReference>
<dbReference type="Gene3D" id="3.30.1550.10">
    <property type="entry name" value="Ribosomal protein L11/L12, N-terminal domain"/>
    <property type="match status" value="1"/>
</dbReference>
<dbReference type="HAMAP" id="MF_00736">
    <property type="entry name" value="Ribosomal_uL11"/>
    <property type="match status" value="1"/>
</dbReference>
<dbReference type="InterPro" id="IPR000911">
    <property type="entry name" value="Ribosomal_uL11"/>
</dbReference>
<dbReference type="InterPro" id="IPR006519">
    <property type="entry name" value="Ribosomal_uL11_bac-typ"/>
</dbReference>
<dbReference type="InterPro" id="IPR020783">
    <property type="entry name" value="Ribosomal_uL11_C"/>
</dbReference>
<dbReference type="InterPro" id="IPR036769">
    <property type="entry name" value="Ribosomal_uL11_C_sf"/>
</dbReference>
<dbReference type="InterPro" id="IPR020785">
    <property type="entry name" value="Ribosomal_uL11_CS"/>
</dbReference>
<dbReference type="InterPro" id="IPR020784">
    <property type="entry name" value="Ribosomal_uL11_N"/>
</dbReference>
<dbReference type="InterPro" id="IPR036796">
    <property type="entry name" value="Ribosomal_uL11_N_sf"/>
</dbReference>
<dbReference type="NCBIfam" id="TIGR01632">
    <property type="entry name" value="L11_bact"/>
    <property type="match status" value="1"/>
</dbReference>
<dbReference type="PANTHER" id="PTHR11661">
    <property type="entry name" value="60S RIBOSOMAL PROTEIN L12"/>
    <property type="match status" value="1"/>
</dbReference>
<dbReference type="PANTHER" id="PTHR11661:SF1">
    <property type="entry name" value="LARGE RIBOSOMAL SUBUNIT PROTEIN UL11M"/>
    <property type="match status" value="1"/>
</dbReference>
<dbReference type="Pfam" id="PF00298">
    <property type="entry name" value="Ribosomal_L11"/>
    <property type="match status" value="1"/>
</dbReference>
<dbReference type="Pfam" id="PF03946">
    <property type="entry name" value="Ribosomal_L11_N"/>
    <property type="match status" value="1"/>
</dbReference>
<dbReference type="SMART" id="SM00649">
    <property type="entry name" value="RL11"/>
    <property type="match status" value="1"/>
</dbReference>
<dbReference type="SUPFAM" id="SSF54747">
    <property type="entry name" value="Ribosomal L11/L12e N-terminal domain"/>
    <property type="match status" value="1"/>
</dbReference>
<dbReference type="SUPFAM" id="SSF46906">
    <property type="entry name" value="Ribosomal protein L11, C-terminal domain"/>
    <property type="match status" value="1"/>
</dbReference>
<dbReference type="PROSITE" id="PS00359">
    <property type="entry name" value="RIBOSOMAL_L11"/>
    <property type="match status" value="1"/>
</dbReference>
<sequence length="143" mass="14808">MAKKIIGFIKLQIPAGKANPSPPVGPALGQRGLNIMEFCKAFNAQTQGMEPGLPVPVVITAFADKSFTFVMKSPPATVLIKKAAGVTKGSPKPHTDKVGKITRAQAEEIAKAKNADLTAADLDAAVRTIAGSARSMGITVEGL</sequence>
<accession>Q46WD0</accession>
<organism>
    <name type="scientific">Cupriavidus pinatubonensis (strain JMP 134 / LMG 1197)</name>
    <name type="common">Cupriavidus necator (strain JMP 134)</name>
    <dbReference type="NCBI Taxonomy" id="264198"/>
    <lineage>
        <taxon>Bacteria</taxon>
        <taxon>Pseudomonadati</taxon>
        <taxon>Pseudomonadota</taxon>
        <taxon>Betaproteobacteria</taxon>
        <taxon>Burkholderiales</taxon>
        <taxon>Burkholderiaceae</taxon>
        <taxon>Cupriavidus</taxon>
    </lineage>
</organism>
<protein>
    <recommendedName>
        <fullName evidence="1">Large ribosomal subunit protein uL11</fullName>
    </recommendedName>
    <alternativeName>
        <fullName evidence="2">50S ribosomal protein L11</fullName>
    </alternativeName>
</protein>
<proteinExistence type="inferred from homology"/>
<name>RL11_CUPPJ</name>
<evidence type="ECO:0000255" key="1">
    <source>
        <dbReference type="HAMAP-Rule" id="MF_00736"/>
    </source>
</evidence>
<evidence type="ECO:0000305" key="2"/>
<feature type="chain" id="PRO_0000258193" description="Large ribosomal subunit protein uL11">
    <location>
        <begin position="1"/>
        <end position="143"/>
    </location>
</feature>
<reference key="1">
    <citation type="journal article" date="2010" name="PLoS ONE">
        <title>The complete multipartite genome sequence of Cupriavidus necator JMP134, a versatile pollutant degrader.</title>
        <authorList>
            <person name="Lykidis A."/>
            <person name="Perez-Pantoja D."/>
            <person name="Ledger T."/>
            <person name="Mavromatis K."/>
            <person name="Anderson I.J."/>
            <person name="Ivanova N.N."/>
            <person name="Hooper S.D."/>
            <person name="Lapidus A."/>
            <person name="Lucas S."/>
            <person name="Gonzalez B."/>
            <person name="Kyrpides N.C."/>
        </authorList>
    </citation>
    <scope>NUCLEOTIDE SEQUENCE [LARGE SCALE GENOMIC DNA]</scope>
    <source>
        <strain>JMP134 / LMG 1197</strain>
    </source>
</reference>